<organism>
    <name type="scientific">Shigella sonnei (strain Ss046)</name>
    <dbReference type="NCBI Taxonomy" id="300269"/>
    <lineage>
        <taxon>Bacteria</taxon>
        <taxon>Pseudomonadati</taxon>
        <taxon>Pseudomonadota</taxon>
        <taxon>Gammaproteobacteria</taxon>
        <taxon>Enterobacterales</taxon>
        <taxon>Enterobacteriaceae</taxon>
        <taxon>Shigella</taxon>
    </lineage>
</organism>
<dbReference type="EC" id="3.5.1.18" evidence="1"/>
<dbReference type="EMBL" id="CP000038">
    <property type="protein sequence ID" value="AAZ89181.1"/>
    <property type="molecule type" value="Genomic_DNA"/>
</dbReference>
<dbReference type="RefSeq" id="WP_001277785.1">
    <property type="nucleotide sequence ID" value="NC_007384.1"/>
</dbReference>
<dbReference type="SMR" id="Q3YZ81"/>
<dbReference type="MEROPS" id="M20.010"/>
<dbReference type="GeneID" id="93774667"/>
<dbReference type="KEGG" id="ssn:SSON_2552"/>
<dbReference type="HOGENOM" id="CLU_021802_4_0_6"/>
<dbReference type="UniPathway" id="UPA00034">
    <property type="reaction ID" value="UER00021"/>
</dbReference>
<dbReference type="Proteomes" id="UP000002529">
    <property type="component" value="Chromosome"/>
</dbReference>
<dbReference type="GO" id="GO:0008777">
    <property type="term" value="F:acetylornithine deacetylase activity"/>
    <property type="evidence" value="ECO:0007669"/>
    <property type="project" value="TreeGrafter"/>
</dbReference>
<dbReference type="GO" id="GO:0050897">
    <property type="term" value="F:cobalt ion binding"/>
    <property type="evidence" value="ECO:0007669"/>
    <property type="project" value="UniProtKB-UniRule"/>
</dbReference>
<dbReference type="GO" id="GO:0009014">
    <property type="term" value="F:succinyl-diaminopimelate desuccinylase activity"/>
    <property type="evidence" value="ECO:0007669"/>
    <property type="project" value="UniProtKB-UniRule"/>
</dbReference>
<dbReference type="GO" id="GO:0008270">
    <property type="term" value="F:zinc ion binding"/>
    <property type="evidence" value="ECO:0007669"/>
    <property type="project" value="UniProtKB-UniRule"/>
</dbReference>
<dbReference type="GO" id="GO:0019877">
    <property type="term" value="P:diaminopimelate biosynthetic process"/>
    <property type="evidence" value="ECO:0007669"/>
    <property type="project" value="UniProtKB-UniRule"/>
</dbReference>
<dbReference type="GO" id="GO:0006526">
    <property type="term" value="P:L-arginine biosynthetic process"/>
    <property type="evidence" value="ECO:0007669"/>
    <property type="project" value="TreeGrafter"/>
</dbReference>
<dbReference type="GO" id="GO:0009089">
    <property type="term" value="P:lysine biosynthetic process via diaminopimelate"/>
    <property type="evidence" value="ECO:0007669"/>
    <property type="project" value="UniProtKB-UniRule"/>
</dbReference>
<dbReference type="CDD" id="cd03891">
    <property type="entry name" value="M20_DapE_proteobac"/>
    <property type="match status" value="1"/>
</dbReference>
<dbReference type="FunFam" id="3.30.70.360:FF:000011">
    <property type="entry name" value="Succinyl-diaminopimelate desuccinylase"/>
    <property type="match status" value="1"/>
</dbReference>
<dbReference type="FunFam" id="3.40.630.10:FF:000005">
    <property type="entry name" value="Succinyl-diaminopimelate desuccinylase"/>
    <property type="match status" value="1"/>
</dbReference>
<dbReference type="FunFam" id="3.40.630.10:FF:000010">
    <property type="entry name" value="Succinyl-diaminopimelate desuccinylase"/>
    <property type="match status" value="1"/>
</dbReference>
<dbReference type="Gene3D" id="3.40.630.10">
    <property type="entry name" value="Zn peptidases"/>
    <property type="match status" value="2"/>
</dbReference>
<dbReference type="HAMAP" id="MF_01690">
    <property type="entry name" value="DapE"/>
    <property type="match status" value="1"/>
</dbReference>
<dbReference type="InterPro" id="IPR001261">
    <property type="entry name" value="ArgE/DapE_CS"/>
</dbReference>
<dbReference type="InterPro" id="IPR036264">
    <property type="entry name" value="Bact_exopeptidase_dim_dom"/>
</dbReference>
<dbReference type="InterPro" id="IPR005941">
    <property type="entry name" value="DapE_proteobac"/>
</dbReference>
<dbReference type="InterPro" id="IPR002933">
    <property type="entry name" value="Peptidase_M20"/>
</dbReference>
<dbReference type="InterPro" id="IPR011650">
    <property type="entry name" value="Peptidase_M20_dimer"/>
</dbReference>
<dbReference type="InterPro" id="IPR050072">
    <property type="entry name" value="Peptidase_M20A"/>
</dbReference>
<dbReference type="NCBIfam" id="TIGR01246">
    <property type="entry name" value="dapE_proteo"/>
    <property type="match status" value="1"/>
</dbReference>
<dbReference type="NCBIfam" id="NF009557">
    <property type="entry name" value="PRK13009.1"/>
    <property type="match status" value="1"/>
</dbReference>
<dbReference type="PANTHER" id="PTHR43808">
    <property type="entry name" value="ACETYLORNITHINE DEACETYLASE"/>
    <property type="match status" value="1"/>
</dbReference>
<dbReference type="PANTHER" id="PTHR43808:SF31">
    <property type="entry name" value="N-ACETYL-L-CITRULLINE DEACETYLASE"/>
    <property type="match status" value="1"/>
</dbReference>
<dbReference type="Pfam" id="PF07687">
    <property type="entry name" value="M20_dimer"/>
    <property type="match status" value="1"/>
</dbReference>
<dbReference type="Pfam" id="PF01546">
    <property type="entry name" value="Peptidase_M20"/>
    <property type="match status" value="1"/>
</dbReference>
<dbReference type="SUPFAM" id="SSF55031">
    <property type="entry name" value="Bacterial exopeptidase dimerisation domain"/>
    <property type="match status" value="1"/>
</dbReference>
<dbReference type="SUPFAM" id="SSF53187">
    <property type="entry name" value="Zn-dependent exopeptidases"/>
    <property type="match status" value="1"/>
</dbReference>
<dbReference type="PROSITE" id="PS00758">
    <property type="entry name" value="ARGE_DAPE_CPG2_1"/>
    <property type="match status" value="1"/>
</dbReference>
<dbReference type="PROSITE" id="PS00759">
    <property type="entry name" value="ARGE_DAPE_CPG2_2"/>
    <property type="match status" value="1"/>
</dbReference>
<comment type="function">
    <text evidence="1">Catalyzes the hydrolysis of N-succinyl-L,L-diaminopimelic acid (SDAP), forming succinate and LL-2,6-diaminopimelate (DAP), an intermediate involved in the bacterial biosynthesis of lysine and meso-diaminopimelic acid, an essential component of bacterial cell walls.</text>
</comment>
<comment type="catalytic activity">
    <reaction evidence="1">
        <text>N-succinyl-(2S,6S)-2,6-diaminopimelate + H2O = (2S,6S)-2,6-diaminopimelate + succinate</text>
        <dbReference type="Rhea" id="RHEA:22608"/>
        <dbReference type="ChEBI" id="CHEBI:15377"/>
        <dbReference type="ChEBI" id="CHEBI:30031"/>
        <dbReference type="ChEBI" id="CHEBI:57609"/>
        <dbReference type="ChEBI" id="CHEBI:58087"/>
        <dbReference type="EC" id="3.5.1.18"/>
    </reaction>
</comment>
<comment type="cofactor">
    <cofactor evidence="1">
        <name>Zn(2+)</name>
        <dbReference type="ChEBI" id="CHEBI:29105"/>
    </cofactor>
    <cofactor evidence="1">
        <name>Co(2+)</name>
        <dbReference type="ChEBI" id="CHEBI:48828"/>
    </cofactor>
    <text evidence="1">Binds 2 Zn(2+) or Co(2+) ions per subunit.</text>
</comment>
<comment type="pathway">
    <text evidence="1">Amino-acid biosynthesis; L-lysine biosynthesis via DAP pathway; LL-2,6-diaminopimelate from (S)-tetrahydrodipicolinate (succinylase route): step 3/3.</text>
</comment>
<comment type="subunit">
    <text evidence="1">Homodimer.</text>
</comment>
<comment type="similarity">
    <text evidence="1">Belongs to the peptidase M20A family. DapE subfamily.</text>
</comment>
<evidence type="ECO:0000255" key="1">
    <source>
        <dbReference type="HAMAP-Rule" id="MF_01690"/>
    </source>
</evidence>
<accession>Q3YZ81</accession>
<name>DAPE_SHISS</name>
<gene>
    <name evidence="1" type="primary">dapE</name>
    <name type="ordered locus">SSON_2552</name>
</gene>
<feature type="chain" id="PRO_0000375749" description="Succinyl-diaminopimelate desuccinylase">
    <location>
        <begin position="1"/>
        <end position="375"/>
    </location>
</feature>
<feature type="active site" evidence="1">
    <location>
        <position position="68"/>
    </location>
</feature>
<feature type="active site" description="Proton acceptor" evidence="1">
    <location>
        <position position="133"/>
    </location>
</feature>
<feature type="binding site" evidence="1">
    <location>
        <position position="66"/>
    </location>
    <ligand>
        <name>Zn(2+)</name>
        <dbReference type="ChEBI" id="CHEBI:29105"/>
        <label>1</label>
    </ligand>
</feature>
<feature type="binding site" evidence="1">
    <location>
        <position position="99"/>
    </location>
    <ligand>
        <name>Zn(2+)</name>
        <dbReference type="ChEBI" id="CHEBI:29105"/>
        <label>1</label>
    </ligand>
</feature>
<feature type="binding site" evidence="1">
    <location>
        <position position="99"/>
    </location>
    <ligand>
        <name>Zn(2+)</name>
        <dbReference type="ChEBI" id="CHEBI:29105"/>
        <label>2</label>
    </ligand>
</feature>
<feature type="binding site" evidence="1">
    <location>
        <position position="134"/>
    </location>
    <ligand>
        <name>Zn(2+)</name>
        <dbReference type="ChEBI" id="CHEBI:29105"/>
        <label>2</label>
    </ligand>
</feature>
<feature type="binding site" evidence="1">
    <location>
        <position position="162"/>
    </location>
    <ligand>
        <name>Zn(2+)</name>
        <dbReference type="ChEBI" id="CHEBI:29105"/>
        <label>1</label>
    </ligand>
</feature>
<feature type="binding site" evidence="1">
    <location>
        <position position="348"/>
    </location>
    <ligand>
        <name>Zn(2+)</name>
        <dbReference type="ChEBI" id="CHEBI:29105"/>
        <label>2</label>
    </ligand>
</feature>
<reference key="1">
    <citation type="journal article" date="2005" name="Nucleic Acids Res.">
        <title>Genome dynamics and diversity of Shigella species, the etiologic agents of bacillary dysentery.</title>
        <authorList>
            <person name="Yang F."/>
            <person name="Yang J."/>
            <person name="Zhang X."/>
            <person name="Chen L."/>
            <person name="Jiang Y."/>
            <person name="Yan Y."/>
            <person name="Tang X."/>
            <person name="Wang J."/>
            <person name="Xiong Z."/>
            <person name="Dong J."/>
            <person name="Xue Y."/>
            <person name="Zhu Y."/>
            <person name="Xu X."/>
            <person name="Sun L."/>
            <person name="Chen S."/>
            <person name="Nie H."/>
            <person name="Peng J."/>
            <person name="Xu J."/>
            <person name="Wang Y."/>
            <person name="Yuan Z."/>
            <person name="Wen Y."/>
            <person name="Yao Z."/>
            <person name="Shen Y."/>
            <person name="Qiang B."/>
            <person name="Hou Y."/>
            <person name="Yu J."/>
            <person name="Jin Q."/>
        </authorList>
    </citation>
    <scope>NUCLEOTIDE SEQUENCE [LARGE SCALE GENOMIC DNA]</scope>
    <source>
        <strain>Ss046</strain>
    </source>
</reference>
<sequence length="375" mass="41255">MSCPVIELTQQLIRRPSLSPDDAGCQALLIDRLQAIGFTVERMDFADTQNFWAWRGQGETLAFAGHTDVVPPGDADRWINPPFEPTIRDGMLFGRGAADMKGSLAAMVVAAERFVAQHPNHTGRLAFLITSDEEASAHNGTVKVVEALMARNERLDYCLVGEPSSIEVVGDVVKNGRRGSLTCNLTIHGVQGHVAYPHLADNPVHRAAPFLNELVAIEWDQGNEFFPATSMQIANIQAGTGSNNVIPGELFVQFNFRFSTELTDEMIKAQVLALLEKHQLRYTVDWWLSGQPFLTARGKLVDAVVNAVEHYNEIKPQLLTTGGTSDGRFIARMGAQVVELGPVNATIHKINECVNAADLQLLARMYQRIMEQLVA</sequence>
<keyword id="KW-0028">Amino-acid biosynthesis</keyword>
<keyword id="KW-0170">Cobalt</keyword>
<keyword id="KW-0220">Diaminopimelate biosynthesis</keyword>
<keyword id="KW-0378">Hydrolase</keyword>
<keyword id="KW-0457">Lysine biosynthesis</keyword>
<keyword id="KW-0479">Metal-binding</keyword>
<keyword id="KW-1185">Reference proteome</keyword>
<keyword id="KW-0862">Zinc</keyword>
<proteinExistence type="inferred from homology"/>
<protein>
    <recommendedName>
        <fullName evidence="1">Succinyl-diaminopimelate desuccinylase</fullName>
        <shortName evidence="1">SDAP desuccinylase</shortName>
        <ecNumber evidence="1">3.5.1.18</ecNumber>
    </recommendedName>
    <alternativeName>
        <fullName evidence="1">N-succinyl-LL-2,6-diaminoheptanedioate amidohydrolase</fullName>
    </alternativeName>
</protein>